<evidence type="ECO:0000250" key="1"/>
<evidence type="ECO:0000250" key="2">
    <source>
        <dbReference type="UniProtKB" id="P00992"/>
    </source>
</evidence>
<evidence type="ECO:0000255" key="3">
    <source>
        <dbReference type="PROSITE-ProRule" id="PRU00031"/>
    </source>
</evidence>
<evidence type="ECO:0000269" key="4">
    <source ref="1"/>
</evidence>
<evidence type="ECO:0000303" key="5">
    <source ref="1"/>
</evidence>
<evidence type="ECO:0000305" key="6"/>
<comment type="function">
    <text evidence="4">Serine protease inhibitor that inhibits chymotrypsin.</text>
</comment>
<comment type="subcellular location">
    <subcellularLocation>
        <location evidence="4">Secreted</location>
    </subcellularLocation>
</comment>
<comment type="tissue specificity">
    <text evidence="4">Expressed by the venom gland.</text>
</comment>
<comment type="similarity">
    <text evidence="6">Belongs to the venom Kunitz-type family.</text>
</comment>
<reference evidence="6" key="1">
    <citation type="submission" date="2006-11" db="UniProtKB">
        <title>Molecular analysis of the bioactive components in snake venoms.</title>
        <authorList>
            <person name="Guo C.T."/>
        </authorList>
    </citation>
    <scope>PROTEIN SEQUENCE</scope>
    <scope>FUNCTION</scope>
    <scope>SUBCELLULAR LOCATION</scope>
    <scope>TISSUE SPECIFICITY</scope>
    <source>
        <strain evidence="4">Burma</strain>
        <strain evidence="4">China</strain>
        <tissue evidence="4">Venom</tissue>
    </source>
</reference>
<proteinExistence type="evidence at protein level"/>
<feature type="peptide" id="PRO_0000414613" description="Kunitz-type serine protease inhibitor C8">
    <location>
        <begin position="1"/>
        <end position="23" status="greater than"/>
    </location>
</feature>
<feature type="domain" description="BPTI/Kunitz inhibitor" evidence="3">
    <location>
        <begin position="7"/>
        <end position="23" status="greater than"/>
    </location>
</feature>
<feature type="site" description="Reactive bond for chymotrypsin" evidence="1">
    <location>
        <begin position="17"/>
        <end position="18"/>
    </location>
</feature>
<feature type="disulfide bond" evidence="2 3">
    <location>
        <begin position="7"/>
        <end status="unknown"/>
    </location>
</feature>
<feature type="disulfide bond" evidence="2 3">
    <location>
        <begin position="16"/>
        <end status="unknown"/>
    </location>
</feature>
<feature type="non-terminal residue" evidence="5">
    <location>
        <position position="23"/>
    </location>
</feature>
<accession>P85039</accession>
<organism>
    <name type="scientific">Daboia siamensis</name>
    <name type="common">Eastern Russel's viper</name>
    <name type="synonym">Daboia russelii siamensis</name>
    <dbReference type="NCBI Taxonomy" id="343250"/>
    <lineage>
        <taxon>Eukaryota</taxon>
        <taxon>Metazoa</taxon>
        <taxon>Chordata</taxon>
        <taxon>Craniata</taxon>
        <taxon>Vertebrata</taxon>
        <taxon>Euteleostomi</taxon>
        <taxon>Lepidosauria</taxon>
        <taxon>Squamata</taxon>
        <taxon>Bifurcata</taxon>
        <taxon>Unidentata</taxon>
        <taxon>Episquamata</taxon>
        <taxon>Toxicofera</taxon>
        <taxon>Serpentes</taxon>
        <taxon>Colubroidea</taxon>
        <taxon>Viperidae</taxon>
        <taxon>Viperinae</taxon>
        <taxon>Daboia</taxon>
    </lineage>
</organism>
<sequence length="23" mass="2691">HDRPKFCYLPADPGECLAHMRSF</sequence>
<protein>
    <recommendedName>
        <fullName>Kunitz-type serine protease inhibitor C8</fullName>
    </recommendedName>
    <alternativeName>
        <fullName evidence="5">BPTI-8</fullName>
    </alternativeName>
    <alternativeName>
        <fullName>Chymotrypsin inhibitor 8</fullName>
    </alternativeName>
    <alternativeName>
        <fullName evidence="5">Chymotrypsin inhibitor B8</fullName>
    </alternativeName>
    <alternativeName>
        <fullName evidence="5">Chymotrypsin inhibitor C8</fullName>
    </alternativeName>
</protein>
<keyword id="KW-0903">Direct protein sequencing</keyword>
<keyword id="KW-1015">Disulfide bond</keyword>
<keyword id="KW-0646">Protease inhibitor</keyword>
<keyword id="KW-0964">Secreted</keyword>
<keyword id="KW-0722">Serine protease inhibitor</keyword>
<dbReference type="GO" id="GO:0005576">
    <property type="term" value="C:extracellular region"/>
    <property type="evidence" value="ECO:0007669"/>
    <property type="project" value="UniProtKB-SubCell"/>
</dbReference>
<dbReference type="GO" id="GO:0004867">
    <property type="term" value="F:serine-type endopeptidase inhibitor activity"/>
    <property type="evidence" value="ECO:0007669"/>
    <property type="project" value="UniProtKB-KW"/>
</dbReference>
<name>VKTC8_DABSI</name>